<reference key="1">
    <citation type="journal article" date="2001" name="Nature">
        <title>Genome sequence of enterohaemorrhagic Escherichia coli O157:H7.</title>
        <authorList>
            <person name="Perna N.T."/>
            <person name="Plunkett G. III"/>
            <person name="Burland V."/>
            <person name="Mau B."/>
            <person name="Glasner J.D."/>
            <person name="Rose D.J."/>
            <person name="Mayhew G.F."/>
            <person name="Evans P.S."/>
            <person name="Gregor J."/>
            <person name="Kirkpatrick H.A."/>
            <person name="Posfai G."/>
            <person name="Hackett J."/>
            <person name="Klink S."/>
            <person name="Boutin A."/>
            <person name="Shao Y."/>
            <person name="Miller L."/>
            <person name="Grotbeck E.J."/>
            <person name="Davis N.W."/>
            <person name="Lim A."/>
            <person name="Dimalanta E.T."/>
            <person name="Potamousis K."/>
            <person name="Apodaca J."/>
            <person name="Anantharaman T.S."/>
            <person name="Lin J."/>
            <person name="Yen G."/>
            <person name="Schwartz D.C."/>
            <person name="Welch R.A."/>
            <person name="Blattner F.R."/>
        </authorList>
    </citation>
    <scope>NUCLEOTIDE SEQUENCE [LARGE SCALE GENOMIC DNA]</scope>
    <source>
        <strain>O157:H7 / EDL933 / ATCC 700927 / EHEC</strain>
    </source>
</reference>
<reference key="2">
    <citation type="journal article" date="2001" name="DNA Res.">
        <title>Complete genome sequence of enterohemorrhagic Escherichia coli O157:H7 and genomic comparison with a laboratory strain K-12.</title>
        <authorList>
            <person name="Hayashi T."/>
            <person name="Makino K."/>
            <person name="Ohnishi M."/>
            <person name="Kurokawa K."/>
            <person name="Ishii K."/>
            <person name="Yokoyama K."/>
            <person name="Han C.-G."/>
            <person name="Ohtsubo E."/>
            <person name="Nakayama K."/>
            <person name="Murata T."/>
            <person name="Tanaka M."/>
            <person name="Tobe T."/>
            <person name="Iida T."/>
            <person name="Takami H."/>
            <person name="Honda T."/>
            <person name="Sasakawa C."/>
            <person name="Ogasawara N."/>
            <person name="Yasunaga T."/>
            <person name="Kuhara S."/>
            <person name="Shiba T."/>
            <person name="Hattori M."/>
            <person name="Shinagawa H."/>
        </authorList>
    </citation>
    <scope>NUCLEOTIDE SEQUENCE [LARGE SCALE GENOMIC DNA]</scope>
    <source>
        <strain>O157:H7 / Sakai / RIMD 0509952 / EHEC</strain>
    </source>
</reference>
<protein>
    <recommendedName>
        <fullName evidence="1">GTPase Obg</fullName>
        <ecNumber evidence="1">3.6.5.-</ecNumber>
    </recommendedName>
    <alternativeName>
        <fullName evidence="1">GTP-binding protein Obg</fullName>
    </alternativeName>
</protein>
<evidence type="ECO:0000255" key="1">
    <source>
        <dbReference type="HAMAP-Rule" id="MF_01454"/>
    </source>
</evidence>
<evidence type="ECO:0000255" key="2">
    <source>
        <dbReference type="PROSITE-ProRule" id="PRU01231"/>
    </source>
</evidence>
<evidence type="ECO:0000256" key="3">
    <source>
        <dbReference type="SAM" id="MobiDB-lite"/>
    </source>
</evidence>
<sequence length="390" mass="43256">MKFVDEASILVVAGDGGNGCVSFRREKYIPKGGPDGGDGGDGGDVWMEADENLNTLIDYRFEKSFRAERGQNGASRDCTGKRGKDVTIKVPVGTRVIDQGTGETMGDMTKHGQRLLVAKGGWHGLGNTRFKSSVNRTPRQKTNGTPGDKRELLLELMLLADVGMLGMPNAGKSTFIRAVSAAKPKVADYPFTTLVPSLGVVRMDNEKSFVVADIPGLIEGAAEGAGLGIRFLKHLERCRVLLHLIDIDPIDGTDPVENARIIISELEKYSQDLAAKPRWLVFNKIDLLDKVEAEEKAKAIAEALGWEDKYYLISAASGLGVKDLCWDVMTFIIENPVVQAEEAKQPEKVEFMWDDYHRQQLEEIAEEDDEDWDDDWDEDDEEGVEFIYKR</sequence>
<proteinExistence type="inferred from homology"/>
<organism>
    <name type="scientific">Escherichia coli O157:H7</name>
    <dbReference type="NCBI Taxonomy" id="83334"/>
    <lineage>
        <taxon>Bacteria</taxon>
        <taxon>Pseudomonadati</taxon>
        <taxon>Pseudomonadota</taxon>
        <taxon>Gammaproteobacteria</taxon>
        <taxon>Enterobacterales</taxon>
        <taxon>Enterobacteriaceae</taxon>
        <taxon>Escherichia</taxon>
    </lineage>
</organism>
<accession>Q8X9K7</accession>
<accession>Q7AAH9</accession>
<name>OBG_ECO57</name>
<keyword id="KW-0963">Cytoplasm</keyword>
<keyword id="KW-0342">GTP-binding</keyword>
<keyword id="KW-0378">Hydrolase</keyword>
<keyword id="KW-0460">Magnesium</keyword>
<keyword id="KW-0479">Metal-binding</keyword>
<keyword id="KW-0547">Nucleotide-binding</keyword>
<keyword id="KW-1185">Reference proteome</keyword>
<gene>
    <name evidence="1" type="primary">obg</name>
    <name type="ordered locus">Z4545</name>
    <name type="ordered locus">ECs4062</name>
</gene>
<comment type="function">
    <text evidence="1">An essential GTPase which binds GTP, GDP and possibly (p)ppGpp with moderate affinity, with high nucleotide exchange rates and a fairly low GTP hydrolysis rate. Plays a role in control of the cell cycle, stress response, ribosome biogenesis and in those bacteria that undergo differentiation, in morphogenesis control.</text>
</comment>
<comment type="cofactor">
    <cofactor evidence="1">
        <name>Mg(2+)</name>
        <dbReference type="ChEBI" id="CHEBI:18420"/>
    </cofactor>
</comment>
<comment type="subunit">
    <text evidence="1">Monomer.</text>
</comment>
<comment type="subcellular location">
    <subcellularLocation>
        <location evidence="1">Cytoplasm</location>
    </subcellularLocation>
</comment>
<comment type="similarity">
    <text evidence="1">Belongs to the TRAFAC class OBG-HflX-like GTPase superfamily. OBG GTPase family.</text>
</comment>
<dbReference type="EC" id="3.6.5.-" evidence="1"/>
<dbReference type="EMBL" id="AE005174">
    <property type="protein sequence ID" value="AAG58317.1"/>
    <property type="molecule type" value="Genomic_DNA"/>
</dbReference>
<dbReference type="EMBL" id="BA000007">
    <property type="protein sequence ID" value="BAB37485.1"/>
    <property type="molecule type" value="Genomic_DNA"/>
</dbReference>
<dbReference type="PIR" id="A85982">
    <property type="entry name" value="A85982"/>
</dbReference>
<dbReference type="PIR" id="F91136">
    <property type="entry name" value="F91136"/>
</dbReference>
<dbReference type="SMR" id="Q8X9K7"/>
<dbReference type="STRING" id="155864.Z4545"/>
<dbReference type="KEGG" id="ece:Z4545"/>
<dbReference type="KEGG" id="ecs:ECs_4062"/>
<dbReference type="PATRIC" id="fig|386585.9.peg.4241"/>
<dbReference type="eggNOG" id="COG0536">
    <property type="taxonomic scope" value="Bacteria"/>
</dbReference>
<dbReference type="HOGENOM" id="CLU_011747_2_0_6"/>
<dbReference type="OMA" id="VVFDWEP"/>
<dbReference type="Proteomes" id="UP000000558">
    <property type="component" value="Chromosome"/>
</dbReference>
<dbReference type="Proteomes" id="UP000002519">
    <property type="component" value="Chromosome"/>
</dbReference>
<dbReference type="GO" id="GO:0005737">
    <property type="term" value="C:cytoplasm"/>
    <property type="evidence" value="ECO:0007669"/>
    <property type="project" value="UniProtKB-SubCell"/>
</dbReference>
<dbReference type="GO" id="GO:0005525">
    <property type="term" value="F:GTP binding"/>
    <property type="evidence" value="ECO:0007669"/>
    <property type="project" value="UniProtKB-UniRule"/>
</dbReference>
<dbReference type="GO" id="GO:0003924">
    <property type="term" value="F:GTPase activity"/>
    <property type="evidence" value="ECO:0007669"/>
    <property type="project" value="UniProtKB-UniRule"/>
</dbReference>
<dbReference type="GO" id="GO:0000287">
    <property type="term" value="F:magnesium ion binding"/>
    <property type="evidence" value="ECO:0007669"/>
    <property type="project" value="InterPro"/>
</dbReference>
<dbReference type="GO" id="GO:0042254">
    <property type="term" value="P:ribosome biogenesis"/>
    <property type="evidence" value="ECO:0007669"/>
    <property type="project" value="UniProtKB-UniRule"/>
</dbReference>
<dbReference type="CDD" id="cd01898">
    <property type="entry name" value="Obg"/>
    <property type="match status" value="1"/>
</dbReference>
<dbReference type="FunFam" id="2.70.210.12:FF:000001">
    <property type="entry name" value="GTPase Obg"/>
    <property type="match status" value="1"/>
</dbReference>
<dbReference type="FunFam" id="3.40.50.300:FF:000185">
    <property type="entry name" value="GTPase Obg"/>
    <property type="match status" value="1"/>
</dbReference>
<dbReference type="Gene3D" id="2.70.210.12">
    <property type="entry name" value="GTP1/OBG domain"/>
    <property type="match status" value="1"/>
</dbReference>
<dbReference type="Gene3D" id="3.40.50.300">
    <property type="entry name" value="P-loop containing nucleotide triphosphate hydrolases"/>
    <property type="match status" value="1"/>
</dbReference>
<dbReference type="HAMAP" id="MF_01454">
    <property type="entry name" value="GTPase_Obg"/>
    <property type="match status" value="1"/>
</dbReference>
<dbReference type="InterPro" id="IPR031167">
    <property type="entry name" value="G_OBG"/>
</dbReference>
<dbReference type="InterPro" id="IPR006073">
    <property type="entry name" value="GTP-bd"/>
</dbReference>
<dbReference type="InterPro" id="IPR014100">
    <property type="entry name" value="GTP-bd_Obg/CgtA"/>
</dbReference>
<dbReference type="InterPro" id="IPR006074">
    <property type="entry name" value="GTP1-OBG_CS"/>
</dbReference>
<dbReference type="InterPro" id="IPR006169">
    <property type="entry name" value="GTP1_OBG_dom"/>
</dbReference>
<dbReference type="InterPro" id="IPR036726">
    <property type="entry name" value="GTP1_OBG_dom_sf"/>
</dbReference>
<dbReference type="InterPro" id="IPR045086">
    <property type="entry name" value="OBG_GTPase"/>
</dbReference>
<dbReference type="InterPro" id="IPR027417">
    <property type="entry name" value="P-loop_NTPase"/>
</dbReference>
<dbReference type="NCBIfam" id="TIGR02729">
    <property type="entry name" value="Obg_CgtA"/>
    <property type="match status" value="1"/>
</dbReference>
<dbReference type="NCBIfam" id="NF008955">
    <property type="entry name" value="PRK12297.1"/>
    <property type="match status" value="1"/>
</dbReference>
<dbReference type="NCBIfam" id="NF008956">
    <property type="entry name" value="PRK12299.1"/>
    <property type="match status" value="1"/>
</dbReference>
<dbReference type="PANTHER" id="PTHR11702">
    <property type="entry name" value="DEVELOPMENTALLY REGULATED GTP-BINDING PROTEIN-RELATED"/>
    <property type="match status" value="1"/>
</dbReference>
<dbReference type="PANTHER" id="PTHR11702:SF31">
    <property type="entry name" value="MITOCHONDRIAL RIBOSOME-ASSOCIATED GTPASE 2"/>
    <property type="match status" value="1"/>
</dbReference>
<dbReference type="Pfam" id="PF01018">
    <property type="entry name" value="GTP1_OBG"/>
    <property type="match status" value="1"/>
</dbReference>
<dbReference type="Pfam" id="PF01926">
    <property type="entry name" value="MMR_HSR1"/>
    <property type="match status" value="1"/>
</dbReference>
<dbReference type="PIRSF" id="PIRSF002401">
    <property type="entry name" value="GTP_bd_Obg/CgtA"/>
    <property type="match status" value="1"/>
</dbReference>
<dbReference type="PRINTS" id="PR00326">
    <property type="entry name" value="GTP1OBG"/>
</dbReference>
<dbReference type="SUPFAM" id="SSF82051">
    <property type="entry name" value="Obg GTP-binding protein N-terminal domain"/>
    <property type="match status" value="1"/>
</dbReference>
<dbReference type="SUPFAM" id="SSF52540">
    <property type="entry name" value="P-loop containing nucleoside triphosphate hydrolases"/>
    <property type="match status" value="1"/>
</dbReference>
<dbReference type="PROSITE" id="PS51710">
    <property type="entry name" value="G_OBG"/>
    <property type="match status" value="1"/>
</dbReference>
<dbReference type="PROSITE" id="PS00905">
    <property type="entry name" value="GTP1_OBG"/>
    <property type="match status" value="1"/>
</dbReference>
<dbReference type="PROSITE" id="PS51883">
    <property type="entry name" value="OBG"/>
    <property type="match status" value="1"/>
</dbReference>
<feature type="chain" id="PRO_0000385918" description="GTPase Obg">
    <location>
        <begin position="1"/>
        <end position="390"/>
    </location>
</feature>
<feature type="domain" description="Obg" evidence="2">
    <location>
        <begin position="1"/>
        <end position="159"/>
    </location>
</feature>
<feature type="domain" description="OBG-type G" evidence="1">
    <location>
        <begin position="160"/>
        <end position="333"/>
    </location>
</feature>
<feature type="region of interest" description="Disordered" evidence="3">
    <location>
        <begin position="127"/>
        <end position="147"/>
    </location>
</feature>
<feature type="compositionally biased region" description="Polar residues" evidence="3">
    <location>
        <begin position="129"/>
        <end position="145"/>
    </location>
</feature>
<feature type="binding site" evidence="1">
    <location>
        <begin position="166"/>
        <end position="173"/>
    </location>
    <ligand>
        <name>GTP</name>
        <dbReference type="ChEBI" id="CHEBI:37565"/>
    </ligand>
</feature>
<feature type="binding site" evidence="1">
    <location>
        <position position="173"/>
    </location>
    <ligand>
        <name>Mg(2+)</name>
        <dbReference type="ChEBI" id="CHEBI:18420"/>
    </ligand>
</feature>
<feature type="binding site" evidence="1">
    <location>
        <begin position="191"/>
        <end position="195"/>
    </location>
    <ligand>
        <name>GTP</name>
        <dbReference type="ChEBI" id="CHEBI:37565"/>
    </ligand>
</feature>
<feature type="binding site" evidence="1">
    <location>
        <position position="193"/>
    </location>
    <ligand>
        <name>Mg(2+)</name>
        <dbReference type="ChEBI" id="CHEBI:18420"/>
    </ligand>
</feature>
<feature type="binding site" evidence="1">
    <location>
        <begin position="213"/>
        <end position="216"/>
    </location>
    <ligand>
        <name>GTP</name>
        <dbReference type="ChEBI" id="CHEBI:37565"/>
    </ligand>
</feature>
<feature type="binding site" evidence="1">
    <location>
        <begin position="283"/>
        <end position="286"/>
    </location>
    <ligand>
        <name>GTP</name>
        <dbReference type="ChEBI" id="CHEBI:37565"/>
    </ligand>
</feature>
<feature type="binding site" evidence="1">
    <location>
        <begin position="314"/>
        <end position="316"/>
    </location>
    <ligand>
        <name>GTP</name>
        <dbReference type="ChEBI" id="CHEBI:37565"/>
    </ligand>
</feature>